<keyword id="KW-0027">Amidation</keyword>
<keyword id="KW-0903">Direct protein sequencing</keyword>
<keyword id="KW-1015">Disulfide bond</keyword>
<keyword id="KW-0372">Hormone</keyword>
<keyword id="KW-1185">Reference proteome</keyword>
<keyword id="KW-0964">Secreted</keyword>
<comment type="function">
    <text evidence="1">Calcitonin is a peptide hormone that causes a rapid but short-lived drop in the level of calcium and phosphate in blood by promoting the incorporation of those ions in the bones. Calcitonin function is mediated by the calcitonin receptor/CALCR and the CALCR-RAMP2 (AMYR2) receptor complex (By similarity).</text>
</comment>
<comment type="subcellular location">
    <subcellularLocation>
        <location>Secreted</location>
    </subcellularLocation>
</comment>
<comment type="similarity">
    <text evidence="3">Belongs to the calcitonin family.</text>
</comment>
<evidence type="ECO:0000250" key="1">
    <source>
        <dbReference type="UniProtKB" id="P01258"/>
    </source>
</evidence>
<evidence type="ECO:0000269" key="2">
    <source>
    </source>
</evidence>
<evidence type="ECO:0000305" key="3"/>
<reference key="1">
    <citation type="journal article" date="1968" name="Proc. Natl. Acad. Sci. U.S.A.">
        <title>The amino acid sequence of porcine thyrocalcitonin.</title>
        <authorList>
            <person name="Potts J.T. Jr."/>
            <person name="Niall H.D."/>
            <person name="Keutmann H.T."/>
            <person name="Brewer H.B. Jr."/>
            <person name="Deftos L.J."/>
        </authorList>
    </citation>
    <scope>PROTEIN SEQUENCE</scope>
    <scope>AMIDATION AT PRO-32</scope>
</reference>
<reference key="2">
    <citation type="journal article" date="1970" name="Biochemistry">
        <title>Degradation and structure of porcine calcitonin-1.</title>
        <authorList>
            <person name="Barg W.F. Jr."/>
            <person name="Englert M.E."/>
            <person name="Davies M.C."/>
            <person name="Colucci D.F."/>
            <person name="Snedeker E.H."/>
            <person name="Dziobkowski C."/>
            <person name="Bell P.H."/>
        </authorList>
    </citation>
    <scope>PROTEIN SEQUENCE</scope>
</reference>
<reference key="3">
    <citation type="journal article" date="1968" name="Helv. Chim. Acta">
        <title>Thyrocalcitonin. II. Structure of alpha-thyrocalcitonin.</title>
        <authorList>
            <person name="Neher R."/>
            <person name="Riniker B."/>
            <person name="Zuber H."/>
            <person name="Rittel W."/>
            <person name="Kahnt F.W."/>
        </authorList>
    </citation>
    <scope>PROTEIN SEQUENCE</scope>
</reference>
<sequence>CSNLSTCVLSAYWRNLNNFHRFSGMGFGPETP</sequence>
<dbReference type="PIR" id="A93769">
    <property type="entry name" value="TCPG"/>
</dbReference>
<dbReference type="SMR" id="P01259"/>
<dbReference type="STRING" id="9823.ENSSSCP00000022117"/>
<dbReference type="MetOSite" id="P01259"/>
<dbReference type="PaxDb" id="9823-ENSSSCP00000022117"/>
<dbReference type="eggNOG" id="ENOG502RZI5">
    <property type="taxonomic scope" value="Eukaryota"/>
</dbReference>
<dbReference type="HOGENOM" id="CLU_122444_0_0_1"/>
<dbReference type="InParanoid" id="P01259"/>
<dbReference type="Proteomes" id="UP000008227">
    <property type="component" value="Unplaced"/>
</dbReference>
<dbReference type="Proteomes" id="UP000314985">
    <property type="component" value="Unplaced"/>
</dbReference>
<dbReference type="Proteomes" id="UP000694570">
    <property type="component" value="Unplaced"/>
</dbReference>
<dbReference type="Proteomes" id="UP000694571">
    <property type="component" value="Unplaced"/>
</dbReference>
<dbReference type="Proteomes" id="UP000694720">
    <property type="component" value="Unplaced"/>
</dbReference>
<dbReference type="Proteomes" id="UP000694722">
    <property type="component" value="Unplaced"/>
</dbReference>
<dbReference type="Proteomes" id="UP000694723">
    <property type="component" value="Unplaced"/>
</dbReference>
<dbReference type="Proteomes" id="UP000694724">
    <property type="component" value="Unplaced"/>
</dbReference>
<dbReference type="Proteomes" id="UP000694725">
    <property type="component" value="Unplaced"/>
</dbReference>
<dbReference type="Proteomes" id="UP000694726">
    <property type="component" value="Unplaced"/>
</dbReference>
<dbReference type="Proteomes" id="UP000694727">
    <property type="component" value="Unplaced"/>
</dbReference>
<dbReference type="Proteomes" id="UP000694728">
    <property type="component" value="Unplaced"/>
</dbReference>
<dbReference type="GO" id="GO:0005576">
    <property type="term" value="C:extracellular region"/>
    <property type="evidence" value="ECO:0007669"/>
    <property type="project" value="UniProtKB-SubCell"/>
</dbReference>
<dbReference type="GO" id="GO:0005179">
    <property type="term" value="F:hormone activity"/>
    <property type="evidence" value="ECO:0007669"/>
    <property type="project" value="UniProtKB-KW"/>
</dbReference>
<dbReference type="InterPro" id="IPR021118">
    <property type="entry name" value="Calcitonin"/>
</dbReference>
<dbReference type="InterPro" id="IPR018360">
    <property type="entry name" value="Calcitonin_CS"/>
</dbReference>
<dbReference type="InterPro" id="IPR001693">
    <property type="entry name" value="Calcitonin_peptide-like"/>
</dbReference>
<dbReference type="PRINTS" id="PR00270">
    <property type="entry name" value="CALCITONINA"/>
</dbReference>
<dbReference type="SMART" id="SM00113">
    <property type="entry name" value="CALCITONIN"/>
    <property type="match status" value="1"/>
</dbReference>
<dbReference type="PROSITE" id="PS00258">
    <property type="entry name" value="CALCITONIN"/>
    <property type="match status" value="1"/>
</dbReference>
<organism>
    <name type="scientific">Sus scrofa</name>
    <name type="common">Pig</name>
    <dbReference type="NCBI Taxonomy" id="9823"/>
    <lineage>
        <taxon>Eukaryota</taxon>
        <taxon>Metazoa</taxon>
        <taxon>Chordata</taxon>
        <taxon>Craniata</taxon>
        <taxon>Vertebrata</taxon>
        <taxon>Euteleostomi</taxon>
        <taxon>Mammalia</taxon>
        <taxon>Eutheria</taxon>
        <taxon>Laurasiatheria</taxon>
        <taxon>Artiodactyla</taxon>
        <taxon>Suina</taxon>
        <taxon>Suidae</taxon>
        <taxon>Sus</taxon>
    </lineage>
</organism>
<proteinExistence type="evidence at protein level"/>
<protein>
    <recommendedName>
        <fullName>Calcitonin</fullName>
    </recommendedName>
</protein>
<name>CALC_PIG</name>
<feature type="peptide" id="PRO_0000044666" description="Calcitonin">
    <location>
        <begin position="1"/>
        <end position="32"/>
    </location>
</feature>
<feature type="modified residue" description="Proline amide" evidence="2">
    <location>
        <position position="32"/>
    </location>
</feature>
<feature type="disulfide bond" evidence="2">
    <location>
        <begin position="1"/>
        <end position="7"/>
    </location>
</feature>
<accession>P01259</accession>
<gene>
    <name type="primary">CALCA</name>
    <name type="synonym">CALC</name>
</gene>